<organism>
    <name type="scientific">Phaeosphaeria nodorum (strain SN15 / ATCC MYA-4574 / FGSC 10173)</name>
    <name type="common">Glume blotch fungus</name>
    <name type="synonym">Parastagonospora nodorum</name>
    <dbReference type="NCBI Taxonomy" id="321614"/>
    <lineage>
        <taxon>Eukaryota</taxon>
        <taxon>Fungi</taxon>
        <taxon>Dikarya</taxon>
        <taxon>Ascomycota</taxon>
        <taxon>Pezizomycotina</taxon>
        <taxon>Dothideomycetes</taxon>
        <taxon>Pleosporomycetidae</taxon>
        <taxon>Pleosporales</taxon>
        <taxon>Pleosporineae</taxon>
        <taxon>Phaeosphaeriaceae</taxon>
        <taxon>Parastagonospora</taxon>
    </lineage>
</organism>
<accession>Q0UNC6</accession>
<evidence type="ECO:0000250" key="1"/>
<evidence type="ECO:0000256" key="2">
    <source>
        <dbReference type="SAM" id="MobiDB-lite"/>
    </source>
</evidence>
<evidence type="ECO:0000305" key="3"/>
<feature type="chain" id="PRO_0000286415" description="Protein HIR1">
    <location>
        <begin position="1"/>
        <end position="1044"/>
    </location>
</feature>
<feature type="repeat" description="WD 1">
    <location>
        <begin position="15"/>
        <end position="54"/>
    </location>
</feature>
<feature type="repeat" description="WD 2">
    <location>
        <begin position="68"/>
        <end position="108"/>
    </location>
</feature>
<feature type="repeat" description="WD 3">
    <location>
        <begin position="115"/>
        <end position="154"/>
    </location>
</feature>
<feature type="repeat" description="WD 4">
    <location>
        <begin position="157"/>
        <end position="196"/>
    </location>
</feature>
<feature type="repeat" description="WD 5">
    <location>
        <begin position="218"/>
        <end position="261"/>
    </location>
</feature>
<feature type="repeat" description="WD 6">
    <location>
        <begin position="267"/>
        <end position="325"/>
    </location>
</feature>
<feature type="repeat" description="WD 7">
    <location>
        <begin position="329"/>
        <end position="370"/>
    </location>
</feature>
<feature type="region of interest" description="Disordered" evidence="2">
    <location>
        <begin position="419"/>
        <end position="476"/>
    </location>
</feature>
<feature type="compositionally biased region" description="Polar residues" evidence="2">
    <location>
        <begin position="427"/>
        <end position="448"/>
    </location>
</feature>
<feature type="compositionally biased region" description="Pro residues" evidence="2">
    <location>
        <begin position="453"/>
        <end position="473"/>
    </location>
</feature>
<name>HIR1_PHANO</name>
<gene>
    <name type="primary">HIR1</name>
    <name type="ORF">SNOG_06738</name>
</gene>
<keyword id="KW-0156">Chromatin regulator</keyword>
<keyword id="KW-0539">Nucleus</keyword>
<keyword id="KW-0677">Repeat</keyword>
<keyword id="KW-0678">Repressor</keyword>
<keyword id="KW-0804">Transcription</keyword>
<keyword id="KW-0805">Transcription regulation</keyword>
<keyword id="KW-0853">WD repeat</keyword>
<comment type="function">
    <text evidence="1">Required for replication-independent chromatin assembly and for the periodic repression of histone gene transcription during the cell cycle.</text>
</comment>
<comment type="subcellular location">
    <subcellularLocation>
        <location evidence="1">Nucleus</location>
    </subcellularLocation>
</comment>
<comment type="similarity">
    <text evidence="3">Belongs to the WD repeat HIR1 family.</text>
</comment>
<comment type="sequence caution" evidence="3">
    <conflict type="erroneous gene model prediction">
        <sequence resource="EMBL-CDS" id="EAT85389"/>
    </conflict>
</comment>
<proteinExistence type="inferred from homology"/>
<sequence length="1044" mass="112713">MHLIKPQWLTHPGDLKDFEVYSCHVSPDGSRLVTAAGDGYVRIWSIDAILNSHDPEYKKPKQLAAVSHHSGTIHAVRFSSNGKYLASGADDKIKGTGTNEAPPVENWRVIRRLIGHDNDVQDLGWSADSSILVSVGLDSKVVVWSGHSFEKLKTLSNHQSHVKGITFDPANKYFATASDDRTIKVYRFNSPPPNATQQDQVNNFVLEHTITTPFLTSPLTTYFRRCSWSPDGAHIAAANATNGPVSSVAILDRGTWDGQPSQTSLIGHEGPVEVTAFSPRLFYQQQPRVEHDGNIHQPTVTVVACAGQDKCLSIWNTVLARPFMMTQELAAKSITDMAWAPDGEKLFATSLDGGILTMVFEPGELGFPASLAENEKTLSKFGAGRRVGIIEGTDALLLEESSKSGELKGVQGRMGALMGDGGAVQPPITNGANGIVPSTTLTNGSSSTAPAAAPAPAPAPAPAPAPAPAPAEPPVDQRVEKLKQRVTVTKEGKKRIAPMLVSSSSGVGTSSLPQTQLISAKTTSGARSDNPHNILDLSKPYDGFPKGGLASMLIGNKRKFAEIEGDEDRQVERRLAASVRPGGAAVVLNSESGLIPPAAAASKSNDVAEPSKVLRPAIISPSLSVSQVRLAVPKVRSVITRTADGSEPQRNGVDANTGKAEIPDTVMLEARNATGHSRTGRAQDHDPAKISCTSKGQPLWQDFLPKSVLLVTGNTNFFAAACEDGSIYAWSPAGRRTLNAMVLDAQPVIMDCRGWWLMCISAVGMCHIWNLKTMSAPHPPISLAPILDIAAHTQGPHLTRSPGIVFARLNSAGCIVVAMSNGEGYVYNSSMYIWQRISEPWWSVGSQYWNTTDSSVSNIRSSQDKAAPKEKDDQVSIENISAGIIPALERNTTNQFLLQGRAFYLQRLIKALISAEGYETFESSVSVAHLENRVAAAKTLGAREEFKIYLSMYVKRLGAEGLKGKIEELLRSLTGDLIVEEDEESGEQQEEIICGWKREELLKEAVLILGKHRDLQRITVPYARLLGIVTEDQRQDEQAMITDM</sequence>
<protein>
    <recommendedName>
        <fullName>Protein HIR1</fullName>
    </recommendedName>
</protein>
<reference key="1">
    <citation type="journal article" date="2007" name="Plant Cell">
        <title>Dothideomycete-plant interactions illuminated by genome sequencing and EST analysis of the wheat pathogen Stagonospora nodorum.</title>
        <authorList>
            <person name="Hane J.K."/>
            <person name="Lowe R.G.T."/>
            <person name="Solomon P.S."/>
            <person name="Tan K.-C."/>
            <person name="Schoch C.L."/>
            <person name="Spatafora J.W."/>
            <person name="Crous P.W."/>
            <person name="Kodira C.D."/>
            <person name="Birren B.W."/>
            <person name="Galagan J.E."/>
            <person name="Torriani S.F.F."/>
            <person name="McDonald B.A."/>
            <person name="Oliver R.P."/>
        </authorList>
    </citation>
    <scope>NUCLEOTIDE SEQUENCE [LARGE SCALE GENOMIC DNA]</scope>
    <source>
        <strain>SN15 / ATCC MYA-4574 / FGSC 10173</strain>
    </source>
</reference>
<dbReference type="EMBL" id="CH445334">
    <property type="protein sequence ID" value="EAT85389.2"/>
    <property type="status" value="ALT_SEQ"/>
    <property type="molecule type" value="Genomic_DNA"/>
</dbReference>
<dbReference type="RefSeq" id="XP_001797101.1">
    <property type="nucleotide sequence ID" value="XM_001797049.1"/>
</dbReference>
<dbReference type="SMR" id="Q0UNC6"/>
<dbReference type="FunCoup" id="Q0UNC6">
    <property type="interactions" value="159"/>
</dbReference>
<dbReference type="STRING" id="321614.Q0UNC6"/>
<dbReference type="GeneID" id="5973991"/>
<dbReference type="KEGG" id="pno:SNOG_06738"/>
<dbReference type="VEuPathDB" id="FungiDB:JI435_067380"/>
<dbReference type="eggNOG" id="KOG0973">
    <property type="taxonomic scope" value="Eukaryota"/>
</dbReference>
<dbReference type="InParanoid" id="Q0UNC6"/>
<dbReference type="OMA" id="RGSWDGD"/>
<dbReference type="Proteomes" id="UP000001055">
    <property type="component" value="Unassembled WGS sequence"/>
</dbReference>
<dbReference type="GO" id="GO:0000785">
    <property type="term" value="C:chromatin"/>
    <property type="evidence" value="ECO:0000318"/>
    <property type="project" value="GO_Central"/>
</dbReference>
<dbReference type="GO" id="GO:0000417">
    <property type="term" value="C:HIR complex"/>
    <property type="evidence" value="ECO:0000318"/>
    <property type="project" value="GO_Central"/>
</dbReference>
<dbReference type="GO" id="GO:0005634">
    <property type="term" value="C:nucleus"/>
    <property type="evidence" value="ECO:0007669"/>
    <property type="project" value="UniProtKB-SubCell"/>
</dbReference>
<dbReference type="GO" id="GO:0006338">
    <property type="term" value="P:chromatin remodeling"/>
    <property type="evidence" value="ECO:0000318"/>
    <property type="project" value="GO_Central"/>
</dbReference>
<dbReference type="GO" id="GO:0006351">
    <property type="term" value="P:DNA-templated transcription"/>
    <property type="evidence" value="ECO:0007669"/>
    <property type="project" value="InterPro"/>
</dbReference>
<dbReference type="GO" id="GO:0006355">
    <property type="term" value="P:regulation of DNA-templated transcription"/>
    <property type="evidence" value="ECO:0007669"/>
    <property type="project" value="InterPro"/>
</dbReference>
<dbReference type="CDD" id="cd00200">
    <property type="entry name" value="WD40"/>
    <property type="match status" value="1"/>
</dbReference>
<dbReference type="FunFam" id="2.130.10.10:FF:000290">
    <property type="entry name" value="Protein HIR"/>
    <property type="match status" value="1"/>
</dbReference>
<dbReference type="Gene3D" id="2.130.10.10">
    <property type="entry name" value="YVTN repeat-like/Quinoprotein amine dehydrogenase"/>
    <property type="match status" value="2"/>
</dbReference>
<dbReference type="InterPro" id="IPR055410">
    <property type="entry name" value="CAF1B_HIR1_beta-prop"/>
</dbReference>
<dbReference type="InterPro" id="IPR031120">
    <property type="entry name" value="HIR1-like"/>
</dbReference>
<dbReference type="InterPro" id="IPR011494">
    <property type="entry name" value="HIRA-like_C"/>
</dbReference>
<dbReference type="InterPro" id="IPR019015">
    <property type="entry name" value="HIRA_B_motif"/>
</dbReference>
<dbReference type="InterPro" id="IPR015943">
    <property type="entry name" value="WD40/YVTN_repeat-like_dom_sf"/>
</dbReference>
<dbReference type="InterPro" id="IPR036322">
    <property type="entry name" value="WD40_repeat_dom_sf"/>
</dbReference>
<dbReference type="InterPro" id="IPR001680">
    <property type="entry name" value="WD40_rpt"/>
</dbReference>
<dbReference type="PANTHER" id="PTHR13831">
    <property type="entry name" value="MEMBER OF THE HIR1 FAMILY OF WD-REPEAT PROTEINS"/>
    <property type="match status" value="1"/>
</dbReference>
<dbReference type="PANTHER" id="PTHR13831:SF0">
    <property type="entry name" value="PROTEIN HIRA"/>
    <property type="match status" value="1"/>
</dbReference>
<dbReference type="Pfam" id="PF24105">
    <property type="entry name" value="Beta-prop_CAF1B_HIR1"/>
    <property type="match status" value="1"/>
</dbReference>
<dbReference type="Pfam" id="PF07569">
    <property type="entry name" value="Hira"/>
    <property type="match status" value="1"/>
</dbReference>
<dbReference type="Pfam" id="PF09453">
    <property type="entry name" value="HIRA_B"/>
    <property type="match status" value="1"/>
</dbReference>
<dbReference type="SMART" id="SM00320">
    <property type="entry name" value="WD40"/>
    <property type="match status" value="7"/>
</dbReference>
<dbReference type="SUPFAM" id="SSF50978">
    <property type="entry name" value="WD40 repeat-like"/>
    <property type="match status" value="2"/>
</dbReference>
<dbReference type="PROSITE" id="PS50082">
    <property type="entry name" value="WD_REPEATS_2"/>
    <property type="match status" value="3"/>
</dbReference>
<dbReference type="PROSITE" id="PS50294">
    <property type="entry name" value="WD_REPEATS_REGION"/>
    <property type="match status" value="1"/>
</dbReference>